<keyword id="KW-0687">Ribonucleoprotein</keyword>
<keyword id="KW-0689">Ribosomal protein</keyword>
<keyword id="KW-0694">RNA-binding</keyword>
<keyword id="KW-0699">rRNA-binding</keyword>
<name>RL3_CHLAB</name>
<organism>
    <name type="scientific">Chlamydia abortus (strain DSM 27085 / S26/3)</name>
    <name type="common">Chlamydophila abortus</name>
    <dbReference type="NCBI Taxonomy" id="218497"/>
    <lineage>
        <taxon>Bacteria</taxon>
        <taxon>Pseudomonadati</taxon>
        <taxon>Chlamydiota</taxon>
        <taxon>Chlamydiia</taxon>
        <taxon>Chlamydiales</taxon>
        <taxon>Chlamydiaceae</taxon>
        <taxon>Chlamydia/Chlamydophila group</taxon>
        <taxon>Chlamydia</taxon>
    </lineage>
</organism>
<comment type="function">
    <text evidence="1">One of the primary rRNA binding proteins, it binds directly near the 3'-end of the 23S rRNA, where it nucleates assembly of the 50S subunit.</text>
</comment>
<comment type="subunit">
    <text evidence="1">Part of the 50S ribosomal subunit. Forms a cluster with proteins L14 and L19.</text>
</comment>
<comment type="similarity">
    <text evidence="1">Belongs to the universal ribosomal protein uL3 family.</text>
</comment>
<proteinExistence type="inferred from homology"/>
<sequence>MQSQLSLMGKKEGMIHVFDKDGNLVACSVISMSSNVVTQIKVDSTDGYNAIQMGANEINVPEKTLHKRVNKPSIGHFKKSGSRVFRELKEVRLSEEAVNEVSLGSEFGLEVFESVSSIDVSGVSKGKGFQGVMKRFGFRGGPQSHGSGFHRHAGSIGMRSTPGRCFPGSKRPSHMGTVNVTVKNLEVIKIDLEKKVLLVKGAIPGPRGSVVVVRRSSRAKG</sequence>
<protein>
    <recommendedName>
        <fullName evidence="1">Large ribosomal subunit protein uL3</fullName>
    </recommendedName>
    <alternativeName>
        <fullName evidence="2">50S ribosomal protein L3</fullName>
    </alternativeName>
</protein>
<accession>Q5L720</accession>
<feature type="chain" id="PRO_0000241332" description="Large ribosomal subunit protein uL3">
    <location>
        <begin position="1"/>
        <end position="221"/>
    </location>
</feature>
<reference key="1">
    <citation type="journal article" date="2005" name="Genome Res.">
        <title>The Chlamydophila abortus genome sequence reveals an array of variable proteins that contribute to interspecies variation.</title>
        <authorList>
            <person name="Thomson N.R."/>
            <person name="Yeats C."/>
            <person name="Bell K."/>
            <person name="Holden M.T.G."/>
            <person name="Bentley S.D."/>
            <person name="Livingstone M."/>
            <person name="Cerdeno-Tarraga A.-M."/>
            <person name="Harris B."/>
            <person name="Doggett J."/>
            <person name="Ormond D."/>
            <person name="Mungall K."/>
            <person name="Clarke K."/>
            <person name="Feltwell T."/>
            <person name="Hance Z."/>
            <person name="Sanders M."/>
            <person name="Quail M.A."/>
            <person name="Price C."/>
            <person name="Barrell B.G."/>
            <person name="Parkhill J."/>
            <person name="Longbottom D."/>
        </authorList>
    </citation>
    <scope>NUCLEOTIDE SEQUENCE [LARGE SCALE GENOMIC DNA]</scope>
    <source>
        <strain>DSM 27085 / S26/3</strain>
    </source>
</reference>
<gene>
    <name evidence="1" type="primary">rplC</name>
    <name type="ordered locus">CAB093</name>
</gene>
<dbReference type="EMBL" id="CR848038">
    <property type="protein sequence ID" value="CAH63550.1"/>
    <property type="molecule type" value="Genomic_DNA"/>
</dbReference>
<dbReference type="RefSeq" id="WP_011096826.1">
    <property type="nucleotide sequence ID" value="NC_004552.2"/>
</dbReference>
<dbReference type="SMR" id="Q5L720"/>
<dbReference type="KEGG" id="cab:CAB093"/>
<dbReference type="eggNOG" id="COG0087">
    <property type="taxonomic scope" value="Bacteria"/>
</dbReference>
<dbReference type="HOGENOM" id="CLU_044142_4_1_0"/>
<dbReference type="OrthoDB" id="9806135at2"/>
<dbReference type="Proteomes" id="UP000001012">
    <property type="component" value="Chromosome"/>
</dbReference>
<dbReference type="GO" id="GO:0022625">
    <property type="term" value="C:cytosolic large ribosomal subunit"/>
    <property type="evidence" value="ECO:0007669"/>
    <property type="project" value="TreeGrafter"/>
</dbReference>
<dbReference type="GO" id="GO:0019843">
    <property type="term" value="F:rRNA binding"/>
    <property type="evidence" value="ECO:0007669"/>
    <property type="project" value="UniProtKB-UniRule"/>
</dbReference>
<dbReference type="GO" id="GO:0003735">
    <property type="term" value="F:structural constituent of ribosome"/>
    <property type="evidence" value="ECO:0007669"/>
    <property type="project" value="InterPro"/>
</dbReference>
<dbReference type="GO" id="GO:0006412">
    <property type="term" value="P:translation"/>
    <property type="evidence" value="ECO:0007669"/>
    <property type="project" value="UniProtKB-UniRule"/>
</dbReference>
<dbReference type="FunFam" id="2.40.30.10:FF:000004">
    <property type="entry name" value="50S ribosomal protein L3"/>
    <property type="match status" value="1"/>
</dbReference>
<dbReference type="Gene3D" id="3.30.160.810">
    <property type="match status" value="1"/>
</dbReference>
<dbReference type="Gene3D" id="2.40.30.10">
    <property type="entry name" value="Translation factors"/>
    <property type="match status" value="1"/>
</dbReference>
<dbReference type="HAMAP" id="MF_01325_B">
    <property type="entry name" value="Ribosomal_uL3_B"/>
    <property type="match status" value="1"/>
</dbReference>
<dbReference type="InterPro" id="IPR000597">
    <property type="entry name" value="Ribosomal_uL3"/>
</dbReference>
<dbReference type="InterPro" id="IPR019927">
    <property type="entry name" value="Ribosomal_uL3_bac/org-type"/>
</dbReference>
<dbReference type="InterPro" id="IPR019926">
    <property type="entry name" value="Ribosomal_uL3_CS"/>
</dbReference>
<dbReference type="InterPro" id="IPR009000">
    <property type="entry name" value="Transl_B-barrel_sf"/>
</dbReference>
<dbReference type="NCBIfam" id="TIGR03625">
    <property type="entry name" value="L3_bact"/>
    <property type="match status" value="1"/>
</dbReference>
<dbReference type="PANTHER" id="PTHR11229">
    <property type="entry name" value="50S RIBOSOMAL PROTEIN L3"/>
    <property type="match status" value="1"/>
</dbReference>
<dbReference type="PANTHER" id="PTHR11229:SF16">
    <property type="entry name" value="LARGE RIBOSOMAL SUBUNIT PROTEIN UL3C"/>
    <property type="match status" value="1"/>
</dbReference>
<dbReference type="Pfam" id="PF00297">
    <property type="entry name" value="Ribosomal_L3"/>
    <property type="match status" value="1"/>
</dbReference>
<dbReference type="SUPFAM" id="SSF50447">
    <property type="entry name" value="Translation proteins"/>
    <property type="match status" value="1"/>
</dbReference>
<dbReference type="PROSITE" id="PS00474">
    <property type="entry name" value="RIBOSOMAL_L3"/>
    <property type="match status" value="1"/>
</dbReference>
<evidence type="ECO:0000255" key="1">
    <source>
        <dbReference type="HAMAP-Rule" id="MF_01325"/>
    </source>
</evidence>
<evidence type="ECO:0000305" key="2"/>